<proteinExistence type="inferred from homology"/>
<name>RNH3_STRP4</name>
<sequence length="293" mass="32331">MASITLTPSEKDIQAFLEHYQTSLAPSKNPYIRYFLKLPQATVSIYTSGKILLQGEGAEKYASFFGYQAVEQTSGQNLPLIGTDEVGNGSYFGGLAVVAAFVTPDQHDFLRKLGVGDSKTLTDQKIRQIAPILKEKIQHQALLLSPSKYNEVIGDRYNAVSVKVALHNQAIYLLLQKGVQPEKIVIDAFTSAKNYDKYLAQETNRFSNPISLEEKAEGKYLAVAVSSVIARDLFLENLENLGRELGYQLPSGAGTASDKVASQILQAYGMQGLSFCAKLHFKNTEKAKKRLER</sequence>
<gene>
    <name evidence="1" type="primary">rnhC</name>
    <name type="ordered locus">SPG_0370</name>
</gene>
<accession>B5E7E5</accession>
<evidence type="ECO:0000255" key="1">
    <source>
        <dbReference type="HAMAP-Rule" id="MF_00053"/>
    </source>
</evidence>
<evidence type="ECO:0000255" key="2">
    <source>
        <dbReference type="PROSITE-ProRule" id="PRU01319"/>
    </source>
</evidence>
<comment type="function">
    <text evidence="1">Endonuclease that specifically degrades the RNA of RNA-DNA hybrids.</text>
</comment>
<comment type="catalytic activity">
    <reaction evidence="1">
        <text>Endonucleolytic cleavage to 5'-phosphomonoester.</text>
        <dbReference type="EC" id="3.1.26.4"/>
    </reaction>
</comment>
<comment type="cofactor">
    <cofactor evidence="1">
        <name>Mn(2+)</name>
        <dbReference type="ChEBI" id="CHEBI:29035"/>
    </cofactor>
    <cofactor evidence="1">
        <name>Mg(2+)</name>
        <dbReference type="ChEBI" id="CHEBI:18420"/>
    </cofactor>
    <text evidence="1">Manganese or magnesium. Binds 1 divalent metal ion per monomer in the absence of substrate. May bind a second metal ion after substrate binding.</text>
</comment>
<comment type="subcellular location">
    <subcellularLocation>
        <location evidence="1">Cytoplasm</location>
    </subcellularLocation>
</comment>
<comment type="similarity">
    <text evidence="1">Belongs to the RNase HII family. RnhC subfamily.</text>
</comment>
<protein>
    <recommendedName>
        <fullName evidence="1">Ribonuclease HIII</fullName>
        <shortName evidence="1">RNase HIII</shortName>
        <ecNumber evidence="1">3.1.26.4</ecNumber>
    </recommendedName>
</protein>
<feature type="chain" id="PRO_1000091680" description="Ribonuclease HIII">
    <location>
        <begin position="1"/>
        <end position="293"/>
    </location>
</feature>
<feature type="domain" description="RNase H type-2" evidence="2">
    <location>
        <begin position="78"/>
        <end position="293"/>
    </location>
</feature>
<feature type="binding site" evidence="1">
    <location>
        <position position="84"/>
    </location>
    <ligand>
        <name>a divalent metal cation</name>
        <dbReference type="ChEBI" id="CHEBI:60240"/>
    </ligand>
</feature>
<feature type="binding site" evidence="1">
    <location>
        <position position="85"/>
    </location>
    <ligand>
        <name>a divalent metal cation</name>
        <dbReference type="ChEBI" id="CHEBI:60240"/>
    </ligand>
</feature>
<feature type="binding site" evidence="1">
    <location>
        <position position="187"/>
    </location>
    <ligand>
        <name>a divalent metal cation</name>
        <dbReference type="ChEBI" id="CHEBI:60240"/>
    </ligand>
</feature>
<reference key="1">
    <citation type="journal article" date="2001" name="Microb. Drug Resist.">
        <title>Annotated draft genomic sequence from a Streptococcus pneumoniae type 19F clinical isolate.</title>
        <authorList>
            <person name="Dopazo J."/>
            <person name="Mendoza A."/>
            <person name="Herrero J."/>
            <person name="Caldara F."/>
            <person name="Humbert Y."/>
            <person name="Friedli L."/>
            <person name="Guerrier M."/>
            <person name="Grand-Schenk E."/>
            <person name="Gandin C."/>
            <person name="de Francesco M."/>
            <person name="Polissi A."/>
            <person name="Buell G."/>
            <person name="Feger G."/>
            <person name="Garcia E."/>
            <person name="Peitsch M."/>
            <person name="Garcia-Bustos J.F."/>
        </authorList>
    </citation>
    <scope>NUCLEOTIDE SEQUENCE [LARGE SCALE GENOMIC DNA]</scope>
    <source>
        <strain>G54</strain>
    </source>
</reference>
<reference key="2">
    <citation type="submission" date="2008-03" db="EMBL/GenBank/DDBJ databases">
        <title>Pneumococcal beta glucoside metabolism investigated by whole genome comparison.</title>
        <authorList>
            <person name="Mulas L."/>
            <person name="Trappetti C."/>
            <person name="Hakenbeck R."/>
            <person name="Iannelli F."/>
            <person name="Pozzi G."/>
            <person name="Davidsen T.M."/>
            <person name="Tettelin H."/>
            <person name="Oggioni M."/>
        </authorList>
    </citation>
    <scope>NUCLEOTIDE SEQUENCE [LARGE SCALE GENOMIC DNA]</scope>
    <source>
        <strain>G54</strain>
    </source>
</reference>
<organism>
    <name type="scientific">Streptococcus pneumoniae serotype 19F (strain G54)</name>
    <dbReference type="NCBI Taxonomy" id="512566"/>
    <lineage>
        <taxon>Bacteria</taxon>
        <taxon>Bacillati</taxon>
        <taxon>Bacillota</taxon>
        <taxon>Bacilli</taxon>
        <taxon>Lactobacillales</taxon>
        <taxon>Streptococcaceae</taxon>
        <taxon>Streptococcus</taxon>
    </lineage>
</organism>
<dbReference type="EC" id="3.1.26.4" evidence="1"/>
<dbReference type="EMBL" id="CP001015">
    <property type="protein sequence ID" value="ACF56508.1"/>
    <property type="molecule type" value="Genomic_DNA"/>
</dbReference>
<dbReference type="SMR" id="B5E7E5"/>
<dbReference type="KEGG" id="spx:SPG_0370"/>
<dbReference type="HOGENOM" id="CLU_059546_1_0_9"/>
<dbReference type="GO" id="GO:0005737">
    <property type="term" value="C:cytoplasm"/>
    <property type="evidence" value="ECO:0007669"/>
    <property type="project" value="UniProtKB-SubCell"/>
</dbReference>
<dbReference type="GO" id="GO:0032299">
    <property type="term" value="C:ribonuclease H2 complex"/>
    <property type="evidence" value="ECO:0007669"/>
    <property type="project" value="TreeGrafter"/>
</dbReference>
<dbReference type="GO" id="GO:0000287">
    <property type="term" value="F:magnesium ion binding"/>
    <property type="evidence" value="ECO:0007669"/>
    <property type="project" value="UniProtKB-UniRule"/>
</dbReference>
<dbReference type="GO" id="GO:0003723">
    <property type="term" value="F:RNA binding"/>
    <property type="evidence" value="ECO:0007669"/>
    <property type="project" value="InterPro"/>
</dbReference>
<dbReference type="GO" id="GO:0004523">
    <property type="term" value="F:RNA-DNA hybrid ribonuclease activity"/>
    <property type="evidence" value="ECO:0007669"/>
    <property type="project" value="UniProtKB-UniRule"/>
</dbReference>
<dbReference type="GO" id="GO:0043137">
    <property type="term" value="P:DNA replication, removal of RNA primer"/>
    <property type="evidence" value="ECO:0007669"/>
    <property type="project" value="TreeGrafter"/>
</dbReference>
<dbReference type="GO" id="GO:0006298">
    <property type="term" value="P:mismatch repair"/>
    <property type="evidence" value="ECO:0007669"/>
    <property type="project" value="TreeGrafter"/>
</dbReference>
<dbReference type="CDD" id="cd06590">
    <property type="entry name" value="RNase_HII_bacteria_HIII_like"/>
    <property type="match status" value="1"/>
</dbReference>
<dbReference type="CDD" id="cd14796">
    <property type="entry name" value="RNAse_HIII_N"/>
    <property type="match status" value="1"/>
</dbReference>
<dbReference type="FunFam" id="3.30.420.10:FF:000047">
    <property type="entry name" value="Ribonuclease HIII"/>
    <property type="match status" value="1"/>
</dbReference>
<dbReference type="Gene3D" id="3.30.420.10">
    <property type="entry name" value="Ribonuclease H-like superfamily/Ribonuclease H"/>
    <property type="match status" value="1"/>
</dbReference>
<dbReference type="Gene3D" id="3.30.310.10">
    <property type="entry name" value="TATA-Binding Protein"/>
    <property type="match status" value="1"/>
</dbReference>
<dbReference type="HAMAP" id="MF_00053">
    <property type="entry name" value="RNase_HIII"/>
    <property type="match status" value="1"/>
</dbReference>
<dbReference type="InterPro" id="IPR001352">
    <property type="entry name" value="RNase_HII/HIII"/>
</dbReference>
<dbReference type="InterPro" id="IPR024567">
    <property type="entry name" value="RNase_HII/HIII_dom"/>
</dbReference>
<dbReference type="InterPro" id="IPR004641">
    <property type="entry name" value="RNase_HIII"/>
</dbReference>
<dbReference type="InterPro" id="IPR024568">
    <property type="entry name" value="RNase_HIII_N"/>
</dbReference>
<dbReference type="InterPro" id="IPR012337">
    <property type="entry name" value="RNaseH-like_sf"/>
</dbReference>
<dbReference type="InterPro" id="IPR036397">
    <property type="entry name" value="RNaseH_sf"/>
</dbReference>
<dbReference type="InterPro" id="IPR012295">
    <property type="entry name" value="TBP_dom_sf"/>
</dbReference>
<dbReference type="NCBIfam" id="TIGR00716">
    <property type="entry name" value="rnhC"/>
    <property type="match status" value="1"/>
</dbReference>
<dbReference type="PANTHER" id="PTHR10954:SF23">
    <property type="entry name" value="RIBONUCLEASE"/>
    <property type="match status" value="1"/>
</dbReference>
<dbReference type="PANTHER" id="PTHR10954">
    <property type="entry name" value="RIBONUCLEASE H2 SUBUNIT A"/>
    <property type="match status" value="1"/>
</dbReference>
<dbReference type="Pfam" id="PF11858">
    <property type="entry name" value="DUF3378"/>
    <property type="match status" value="1"/>
</dbReference>
<dbReference type="Pfam" id="PF01351">
    <property type="entry name" value="RNase_HII"/>
    <property type="match status" value="1"/>
</dbReference>
<dbReference type="PIRSF" id="PIRSF037748">
    <property type="entry name" value="RnhC"/>
    <property type="match status" value="1"/>
</dbReference>
<dbReference type="SUPFAM" id="SSF53098">
    <property type="entry name" value="Ribonuclease H-like"/>
    <property type="match status" value="1"/>
</dbReference>
<dbReference type="PROSITE" id="PS51975">
    <property type="entry name" value="RNASE_H_2"/>
    <property type="match status" value="1"/>
</dbReference>
<keyword id="KW-0963">Cytoplasm</keyword>
<keyword id="KW-0255">Endonuclease</keyword>
<keyword id="KW-0378">Hydrolase</keyword>
<keyword id="KW-0460">Magnesium</keyword>
<keyword id="KW-0479">Metal-binding</keyword>
<keyword id="KW-0540">Nuclease</keyword>